<sequence>MKALERVYVIGHKNPDTDSVCSAIGYAHFKNNVEKGKTFIPARSGDLTNESLFVLKYFGMNPPLHIETLEPTVEDLELKNPIFVTPDTSAYDVAMLMESRGIKNVPVVSKEKMIGVVTESNIARVYVRRLKIEPLVIHPVPFDQLVRILKAEVVCDYMKEKTVSGKVHIAVDALHVLLGKIEIGDVVIVGDNEPAQIALLEKGAKLMIVVNNAPVSNRVLEIAKEKNAAVLRVKFDAFSAAKLINLSLPVTLVMSKKFPTVTKKDTLEEVKEIVFTSKIRAAFVEDEKGRLCGVITRTDLLKDVRKKVILVDHNEITQAPEGVEKAEILEIIDHHRLGGLSTLNPVFFYNEPVGSTSTIVAEFFLKNGVKMEREIAGILLSGIVSDTLFFKLSTTTEKDRKMANFLADVAKLDLEKFAKKLLKEGMKIPEDVDPAELLKRDVKVYEMGEESFAVSQIMTSDFSTLLKEKERFMNTLKTLKGEFGVKHFFVLFTNPVEEASLLMMDGDQKLVEKAFNAEKKDGLFLLKGVMSRKKDFVPKIGEVLRRER</sequence>
<accession>Q9WZ56</accession>
<organism>
    <name type="scientific">Thermotoga maritima (strain ATCC 43589 / DSM 3109 / JCM 10099 / NBRC 100826 / MSB8)</name>
    <dbReference type="NCBI Taxonomy" id="243274"/>
    <lineage>
        <taxon>Bacteria</taxon>
        <taxon>Thermotogati</taxon>
        <taxon>Thermotogota</taxon>
        <taxon>Thermotogae</taxon>
        <taxon>Thermotogales</taxon>
        <taxon>Thermotogaceae</taxon>
        <taxon>Thermotoga</taxon>
    </lineage>
</organism>
<name>PPAC_THEMA</name>
<proteinExistence type="inferred from homology"/>
<keyword id="KW-0129">CBS domain</keyword>
<keyword id="KW-0963">Cytoplasm</keyword>
<keyword id="KW-0378">Hydrolase</keyword>
<keyword id="KW-0464">Manganese</keyword>
<keyword id="KW-0479">Metal-binding</keyword>
<keyword id="KW-1185">Reference proteome</keyword>
<keyword id="KW-0677">Repeat</keyword>
<dbReference type="EC" id="3.6.1.1"/>
<dbReference type="EMBL" id="AE000512">
    <property type="protein sequence ID" value="AAD35672.1"/>
    <property type="status" value="ALT_INIT"/>
    <property type="molecule type" value="Genomic_DNA"/>
</dbReference>
<dbReference type="PIR" id="D72359">
    <property type="entry name" value="D72359"/>
</dbReference>
<dbReference type="RefSeq" id="NP_228397.1">
    <property type="nucleotide sequence ID" value="NC_000853.1"/>
</dbReference>
<dbReference type="RefSeq" id="WP_238581565.1">
    <property type="nucleotide sequence ID" value="NC_000853.1"/>
</dbReference>
<dbReference type="SMR" id="Q9WZ56"/>
<dbReference type="FunCoup" id="Q9WZ56">
    <property type="interactions" value="22"/>
</dbReference>
<dbReference type="STRING" id="243274.TM_0587"/>
<dbReference type="PaxDb" id="243274-THEMA_01730"/>
<dbReference type="EnsemblBacteria" id="AAD35672">
    <property type="protein sequence ID" value="AAD35672"/>
    <property type="gene ID" value="TM_0587"/>
</dbReference>
<dbReference type="KEGG" id="tma:TM0587"/>
<dbReference type="PATRIC" id="fig|243274.5.peg.596"/>
<dbReference type="eggNOG" id="COG0517">
    <property type="taxonomic scope" value="Bacteria"/>
</dbReference>
<dbReference type="eggNOG" id="COG1227">
    <property type="taxonomic scope" value="Bacteria"/>
</dbReference>
<dbReference type="InParanoid" id="Q9WZ56"/>
<dbReference type="OrthoDB" id="9766150at2"/>
<dbReference type="Proteomes" id="UP000008183">
    <property type="component" value="Chromosome"/>
</dbReference>
<dbReference type="GO" id="GO:0005737">
    <property type="term" value="C:cytoplasm"/>
    <property type="evidence" value="ECO:0000318"/>
    <property type="project" value="GO_Central"/>
</dbReference>
<dbReference type="GO" id="GO:0004427">
    <property type="term" value="F:inorganic diphosphate phosphatase activity"/>
    <property type="evidence" value="ECO:0007669"/>
    <property type="project" value="UniProtKB-EC"/>
</dbReference>
<dbReference type="GO" id="GO:0046872">
    <property type="term" value="F:metal ion binding"/>
    <property type="evidence" value="ECO:0007669"/>
    <property type="project" value="UniProtKB-KW"/>
</dbReference>
<dbReference type="FunFam" id="3.90.1640.10:FF:000001">
    <property type="entry name" value="Probable manganese-dependent inorganic pyrophosphatase"/>
    <property type="match status" value="1"/>
</dbReference>
<dbReference type="Gene3D" id="3.10.310.20">
    <property type="entry name" value="DHHA2 domain"/>
    <property type="match status" value="1"/>
</dbReference>
<dbReference type="Gene3D" id="3.40.1390.20">
    <property type="entry name" value="HprK N-terminal domain-like"/>
    <property type="match status" value="1"/>
</dbReference>
<dbReference type="Gene3D" id="3.90.1640.10">
    <property type="entry name" value="inorganic pyrophosphatase (n-terminal core)"/>
    <property type="match status" value="2"/>
</dbReference>
<dbReference type="InterPro" id="IPR000644">
    <property type="entry name" value="CBS_dom"/>
</dbReference>
<dbReference type="InterPro" id="IPR046342">
    <property type="entry name" value="CBS_dom_sf"/>
</dbReference>
<dbReference type="InterPro" id="IPR001667">
    <property type="entry name" value="DDH_dom"/>
</dbReference>
<dbReference type="InterPro" id="IPR038763">
    <property type="entry name" value="DHH_sf"/>
</dbReference>
<dbReference type="InterPro" id="IPR004097">
    <property type="entry name" value="DHHA2"/>
</dbReference>
<dbReference type="InterPro" id="IPR038222">
    <property type="entry name" value="DHHA2_dom_sf"/>
</dbReference>
<dbReference type="InterPro" id="IPR010766">
    <property type="entry name" value="DRTGG"/>
</dbReference>
<dbReference type="InterPro" id="IPR028979">
    <property type="entry name" value="Ser_kin/Pase_Hpr-like_N_sf"/>
</dbReference>
<dbReference type="NCBIfam" id="NF011442">
    <property type="entry name" value="PRK14869.1-4"/>
    <property type="match status" value="1"/>
</dbReference>
<dbReference type="NCBIfam" id="NF011443">
    <property type="entry name" value="PRK14869.1-5"/>
    <property type="match status" value="1"/>
</dbReference>
<dbReference type="PANTHER" id="PTHR12112">
    <property type="entry name" value="BNIP - RELATED"/>
    <property type="match status" value="1"/>
</dbReference>
<dbReference type="PANTHER" id="PTHR12112:SF22">
    <property type="entry name" value="MANGANESE-DEPENDENT INORGANIC PYROPHOSPHATASE-RELATED"/>
    <property type="match status" value="1"/>
</dbReference>
<dbReference type="Pfam" id="PF00571">
    <property type="entry name" value="CBS"/>
    <property type="match status" value="2"/>
</dbReference>
<dbReference type="Pfam" id="PF01368">
    <property type="entry name" value="DHH"/>
    <property type="match status" value="1"/>
</dbReference>
<dbReference type="Pfam" id="PF02833">
    <property type="entry name" value="DHHA2"/>
    <property type="match status" value="1"/>
</dbReference>
<dbReference type="Pfam" id="PF07085">
    <property type="entry name" value="DRTGG"/>
    <property type="match status" value="1"/>
</dbReference>
<dbReference type="SMART" id="SM00116">
    <property type="entry name" value="CBS"/>
    <property type="match status" value="2"/>
</dbReference>
<dbReference type="SMART" id="SM01131">
    <property type="entry name" value="DHHA2"/>
    <property type="match status" value="1"/>
</dbReference>
<dbReference type="SUPFAM" id="SSF54631">
    <property type="entry name" value="CBS-domain pair"/>
    <property type="match status" value="1"/>
</dbReference>
<dbReference type="SUPFAM" id="SSF64182">
    <property type="entry name" value="DHH phosphoesterases"/>
    <property type="match status" value="1"/>
</dbReference>
<dbReference type="SUPFAM" id="SSF75138">
    <property type="entry name" value="HprK N-terminal domain-like"/>
    <property type="match status" value="1"/>
</dbReference>
<dbReference type="PROSITE" id="PS51371">
    <property type="entry name" value="CBS"/>
    <property type="match status" value="2"/>
</dbReference>
<evidence type="ECO:0000250" key="1"/>
<evidence type="ECO:0000255" key="2">
    <source>
        <dbReference type="PROSITE-ProRule" id="PRU00703"/>
    </source>
</evidence>
<evidence type="ECO:0000305" key="3"/>
<protein>
    <recommendedName>
        <fullName>Probable manganese-dependent inorganic pyrophosphatase</fullName>
        <ecNumber>3.6.1.1</ecNumber>
    </recommendedName>
    <alternativeName>
        <fullName>Pyrophosphate phospho-hydrolase</fullName>
        <shortName>PPase</shortName>
    </alternativeName>
</protein>
<gene>
    <name type="primary">ppaC</name>
    <name type="ordered locus">TM_0587</name>
</gene>
<comment type="catalytic activity">
    <reaction>
        <text>diphosphate + H2O = 2 phosphate + H(+)</text>
        <dbReference type="Rhea" id="RHEA:24576"/>
        <dbReference type="ChEBI" id="CHEBI:15377"/>
        <dbReference type="ChEBI" id="CHEBI:15378"/>
        <dbReference type="ChEBI" id="CHEBI:33019"/>
        <dbReference type="ChEBI" id="CHEBI:43474"/>
        <dbReference type="EC" id="3.6.1.1"/>
    </reaction>
</comment>
<comment type="cofactor">
    <cofactor evidence="1">
        <name>Mn(2+)</name>
        <dbReference type="ChEBI" id="CHEBI:29035"/>
    </cofactor>
    <text evidence="1">Binds 2 manganese ions per subunit.</text>
</comment>
<comment type="subcellular location">
    <subcellularLocation>
        <location evidence="1">Cytoplasm</location>
    </subcellularLocation>
</comment>
<comment type="similarity">
    <text evidence="3">Belongs to the PPase class C family.</text>
</comment>
<comment type="sequence caution" evidence="3">
    <conflict type="erroneous initiation">
        <sequence resource="EMBL-CDS" id="AAD35672"/>
    </conflict>
</comment>
<feature type="chain" id="PRO_0000158597" description="Probable manganese-dependent inorganic pyrophosphatase">
    <location>
        <begin position="1"/>
        <end position="548"/>
    </location>
</feature>
<feature type="domain" description="CBS 1" evidence="2">
    <location>
        <begin position="77"/>
        <end position="132"/>
    </location>
</feature>
<feature type="domain" description="CBS 2" evidence="2">
    <location>
        <begin position="254"/>
        <end position="311"/>
    </location>
</feature>
<feature type="region of interest" description="PPase part 1">
    <location>
        <begin position="1"/>
        <end position="74"/>
    </location>
</feature>
<feature type="region of interest" description="PPase part 2">
    <location>
        <begin position="306"/>
        <end position="548"/>
    </location>
</feature>
<feature type="binding site" evidence="1">
    <location>
        <position position="12"/>
    </location>
    <ligand>
        <name>Mn(2+)</name>
        <dbReference type="ChEBI" id="CHEBI:29035"/>
        <label>1</label>
    </ligand>
</feature>
<feature type="binding site" evidence="1">
    <location>
        <position position="16"/>
    </location>
    <ligand>
        <name>Mn(2+)</name>
        <dbReference type="ChEBI" id="CHEBI:29035"/>
        <label>1</label>
    </ligand>
</feature>
<feature type="binding site" evidence="1">
    <location>
        <position position="18"/>
    </location>
    <ligand>
        <name>Mn(2+)</name>
        <dbReference type="ChEBI" id="CHEBI:29035"/>
        <label>2</label>
    </ligand>
</feature>
<feature type="binding site" evidence="1">
    <location>
        <position position="312"/>
    </location>
    <ligand>
        <name>Mn(2+)</name>
        <dbReference type="ChEBI" id="CHEBI:29035"/>
        <label>1</label>
    </ligand>
</feature>
<feature type="binding site" evidence="1">
    <location>
        <position position="312"/>
    </location>
    <ligand>
        <name>Mn(2+)</name>
        <dbReference type="ChEBI" id="CHEBI:29035"/>
        <label>2</label>
    </ligand>
</feature>
<feature type="binding site" evidence="1">
    <location>
        <position position="334"/>
    </location>
    <ligand>
        <name>Mn(2+)</name>
        <dbReference type="ChEBI" id="CHEBI:29035"/>
        <label>2</label>
    </ligand>
</feature>
<feature type="binding site" evidence="1">
    <location>
        <position position="386"/>
    </location>
    <ligand>
        <name>Mn(2+)</name>
        <dbReference type="ChEBI" id="CHEBI:29035"/>
        <label>2</label>
    </ligand>
</feature>
<reference key="1">
    <citation type="journal article" date="1999" name="Nature">
        <title>Evidence for lateral gene transfer between Archaea and Bacteria from genome sequence of Thermotoga maritima.</title>
        <authorList>
            <person name="Nelson K.E."/>
            <person name="Clayton R.A."/>
            <person name="Gill S.R."/>
            <person name="Gwinn M.L."/>
            <person name="Dodson R.J."/>
            <person name="Haft D.H."/>
            <person name="Hickey E.K."/>
            <person name="Peterson J.D."/>
            <person name="Nelson W.C."/>
            <person name="Ketchum K.A."/>
            <person name="McDonald L.A."/>
            <person name="Utterback T.R."/>
            <person name="Malek J.A."/>
            <person name="Linher K.D."/>
            <person name="Garrett M.M."/>
            <person name="Stewart A.M."/>
            <person name="Cotton M.D."/>
            <person name="Pratt M.S."/>
            <person name="Phillips C.A."/>
            <person name="Richardson D.L."/>
            <person name="Heidelberg J.F."/>
            <person name="Sutton G.G."/>
            <person name="Fleischmann R.D."/>
            <person name="Eisen J.A."/>
            <person name="White O."/>
            <person name="Salzberg S.L."/>
            <person name="Smith H.O."/>
            <person name="Venter J.C."/>
            <person name="Fraser C.M."/>
        </authorList>
    </citation>
    <scope>NUCLEOTIDE SEQUENCE [LARGE SCALE GENOMIC DNA]</scope>
    <source>
        <strain>ATCC 43589 / DSM 3109 / JCM 10099 / NBRC 100826 / MSB8</strain>
    </source>
</reference>